<gene>
    <name evidence="1" type="primary">glsA</name>
    <name type="ordered locus">Ava_0966</name>
</gene>
<proteinExistence type="inferred from homology"/>
<organism>
    <name type="scientific">Trichormus variabilis (strain ATCC 29413 / PCC 7937)</name>
    <name type="common">Anabaena variabilis</name>
    <dbReference type="NCBI Taxonomy" id="240292"/>
    <lineage>
        <taxon>Bacteria</taxon>
        <taxon>Bacillati</taxon>
        <taxon>Cyanobacteriota</taxon>
        <taxon>Cyanophyceae</taxon>
        <taxon>Nostocales</taxon>
        <taxon>Nostocaceae</taxon>
        <taxon>Trichormus</taxon>
    </lineage>
</organism>
<reference key="1">
    <citation type="journal article" date="2014" name="Stand. Genomic Sci.">
        <title>Complete genome sequence of Anabaena variabilis ATCC 29413.</title>
        <authorList>
            <person name="Thiel T."/>
            <person name="Pratte B.S."/>
            <person name="Zhong J."/>
            <person name="Goodwin L."/>
            <person name="Copeland A."/>
            <person name="Lucas S."/>
            <person name="Han C."/>
            <person name="Pitluck S."/>
            <person name="Land M.L."/>
            <person name="Kyrpides N.C."/>
            <person name="Woyke T."/>
        </authorList>
    </citation>
    <scope>NUCLEOTIDE SEQUENCE [LARGE SCALE GENOMIC DNA]</scope>
    <source>
        <strain>ATCC 29413 / PCC 7937</strain>
    </source>
</reference>
<sequence length="334" mass="36741">MSDQANQGDLEIRPSPLLTVINDLHSKYKSLKEGIVANYIPELAKVNPDLFSISIVTVDGQVYQVGDYQQLFTIQSISKVFAYGLALEDHGRDYVLTRVGVEPTGEAFNSIILDEQSKRPYNPMVNAGAIATTSLIKGAGATERLNRVLEMFRRYIGHDVFVDISVFTSERSTGHRNRAMAHLMLNFGMIDRNLEEALDLYFQQCAVMVNCHDLAVMAATLANRGVNPVTGEQAVNSRYIKDILSVMYTCGMYNFAGEWAYKVGIPAKSGVCGGIMAVVPNQMGIAVFSPPLDIRGNSVRGVKVCEELSQQLGLHLFECVKVENGKWGVGNCEC</sequence>
<evidence type="ECO:0000255" key="1">
    <source>
        <dbReference type="HAMAP-Rule" id="MF_00313"/>
    </source>
</evidence>
<dbReference type="EC" id="3.5.1.2" evidence="1"/>
<dbReference type="EMBL" id="CP000117">
    <property type="protein sequence ID" value="ABA20590.1"/>
    <property type="molecule type" value="Genomic_DNA"/>
</dbReference>
<dbReference type="SMR" id="Q3MEJ6"/>
<dbReference type="STRING" id="240292.Ava_0966"/>
<dbReference type="KEGG" id="ava:Ava_0966"/>
<dbReference type="eggNOG" id="COG2066">
    <property type="taxonomic scope" value="Bacteria"/>
</dbReference>
<dbReference type="HOGENOM" id="CLU_027932_1_0_3"/>
<dbReference type="Proteomes" id="UP000002533">
    <property type="component" value="Chromosome"/>
</dbReference>
<dbReference type="GO" id="GO:0004359">
    <property type="term" value="F:glutaminase activity"/>
    <property type="evidence" value="ECO:0007669"/>
    <property type="project" value="UniProtKB-UniRule"/>
</dbReference>
<dbReference type="GO" id="GO:0006537">
    <property type="term" value="P:glutamate biosynthetic process"/>
    <property type="evidence" value="ECO:0007669"/>
    <property type="project" value="TreeGrafter"/>
</dbReference>
<dbReference type="GO" id="GO:0006543">
    <property type="term" value="P:glutamine catabolic process"/>
    <property type="evidence" value="ECO:0007669"/>
    <property type="project" value="TreeGrafter"/>
</dbReference>
<dbReference type="FunFam" id="3.40.710.10:FF:000005">
    <property type="entry name" value="Glutaminase"/>
    <property type="match status" value="1"/>
</dbReference>
<dbReference type="Gene3D" id="3.40.710.10">
    <property type="entry name" value="DD-peptidase/beta-lactamase superfamily"/>
    <property type="match status" value="1"/>
</dbReference>
<dbReference type="HAMAP" id="MF_00313">
    <property type="entry name" value="Glutaminase"/>
    <property type="match status" value="1"/>
</dbReference>
<dbReference type="InterPro" id="IPR012338">
    <property type="entry name" value="Beta-lactam/transpept-like"/>
</dbReference>
<dbReference type="InterPro" id="IPR015868">
    <property type="entry name" value="Glutaminase"/>
</dbReference>
<dbReference type="NCBIfam" id="TIGR03814">
    <property type="entry name" value="Gln_ase"/>
    <property type="match status" value="1"/>
</dbReference>
<dbReference type="PANTHER" id="PTHR12544">
    <property type="entry name" value="GLUTAMINASE"/>
    <property type="match status" value="1"/>
</dbReference>
<dbReference type="PANTHER" id="PTHR12544:SF29">
    <property type="entry name" value="GLUTAMINASE"/>
    <property type="match status" value="1"/>
</dbReference>
<dbReference type="Pfam" id="PF04960">
    <property type="entry name" value="Glutaminase"/>
    <property type="match status" value="1"/>
</dbReference>
<dbReference type="SUPFAM" id="SSF56601">
    <property type="entry name" value="beta-lactamase/transpeptidase-like"/>
    <property type="match status" value="1"/>
</dbReference>
<accession>Q3MEJ6</accession>
<feature type="chain" id="PRO_1000048321" description="Glutaminase">
    <location>
        <begin position="1"/>
        <end position="334"/>
    </location>
</feature>
<feature type="binding site" evidence="1">
    <location>
        <position position="76"/>
    </location>
    <ligand>
        <name>substrate</name>
    </ligand>
</feature>
<feature type="binding site" evidence="1">
    <location>
        <position position="126"/>
    </location>
    <ligand>
        <name>substrate</name>
    </ligand>
</feature>
<feature type="binding site" evidence="1">
    <location>
        <position position="170"/>
    </location>
    <ligand>
        <name>substrate</name>
    </ligand>
</feature>
<feature type="binding site" evidence="1">
    <location>
        <position position="177"/>
    </location>
    <ligand>
        <name>substrate</name>
    </ligand>
</feature>
<feature type="binding site" evidence="1">
    <location>
        <position position="201"/>
    </location>
    <ligand>
        <name>substrate</name>
    </ligand>
</feature>
<feature type="binding site" evidence="1">
    <location>
        <position position="253"/>
    </location>
    <ligand>
        <name>substrate</name>
    </ligand>
</feature>
<feature type="binding site" evidence="1">
    <location>
        <position position="271"/>
    </location>
    <ligand>
        <name>substrate</name>
    </ligand>
</feature>
<protein>
    <recommendedName>
        <fullName evidence="1">Glutaminase</fullName>
        <ecNumber evidence="1">3.5.1.2</ecNumber>
    </recommendedName>
</protein>
<comment type="catalytic activity">
    <reaction evidence="1">
        <text>L-glutamine + H2O = L-glutamate + NH4(+)</text>
        <dbReference type="Rhea" id="RHEA:15889"/>
        <dbReference type="ChEBI" id="CHEBI:15377"/>
        <dbReference type="ChEBI" id="CHEBI:28938"/>
        <dbReference type="ChEBI" id="CHEBI:29985"/>
        <dbReference type="ChEBI" id="CHEBI:58359"/>
        <dbReference type="EC" id="3.5.1.2"/>
    </reaction>
</comment>
<comment type="subunit">
    <text evidence="1">Homotetramer.</text>
</comment>
<comment type="similarity">
    <text evidence="1">Belongs to the glutaminase family.</text>
</comment>
<name>GLSA_TRIV2</name>
<keyword id="KW-0378">Hydrolase</keyword>